<name>ARLY_STRCO</name>
<proteinExistence type="inferred from homology"/>
<protein>
    <recommendedName>
        <fullName evidence="1">Argininosuccinate lyase</fullName>
        <shortName evidence="1">ASAL</shortName>
        <ecNumber evidence="1">4.3.2.1</ecNumber>
    </recommendedName>
    <alternativeName>
        <fullName evidence="1">Arginosuccinase</fullName>
    </alternativeName>
</protein>
<gene>
    <name evidence="1" type="primary">argH</name>
    <name type="ordered locus">SCO1570</name>
    <name type="ORF">SCL24.06c</name>
</gene>
<organism>
    <name type="scientific">Streptomyces coelicolor (strain ATCC BAA-471 / A3(2) / M145)</name>
    <dbReference type="NCBI Taxonomy" id="100226"/>
    <lineage>
        <taxon>Bacteria</taxon>
        <taxon>Bacillati</taxon>
        <taxon>Actinomycetota</taxon>
        <taxon>Actinomycetes</taxon>
        <taxon>Kitasatosporales</taxon>
        <taxon>Streptomycetaceae</taxon>
        <taxon>Streptomyces</taxon>
        <taxon>Streptomyces albidoflavus group</taxon>
    </lineage>
</organism>
<sequence length="475" mass="50942">MSSNSGDVRLWGGRFADGPAEALAKLSASVHFDWRLAPYDIAGSRAHARVLHAAGLLTEDELTRMIAGLDRLEADVADGSFTGTIADEDVHTALERGLLERLGPDLGGKLRAGRSRNDQVATLFRMYLRDHARTVGSLIADLQDALVGLAEAHPDVAMPGRTHLQHAQPVLFAHHVLAHAQALGRDAERLRQWDARTAVSPYGSGALAGSSLGLDPEAVARDLGFEHGSVGNSIDGTASRDFVAEFAFITAMIGVNVSRIAEEIIIWNTKEFSFVTLHDAFSTGSSIMPQKKNPDIAELARGKSGRLIGNLTGLMATLKALPLAYNRDLQEDKEPVFDSIDQLEVLLPAFTGMMATLTVHRERMEELAPAGFSLATDIAEWLVKQGVPFRVAHEVAGECVKVAEADGKELDELTDEQFAKISEHLTPEVRTVLNVPGALASRDGRGGTAPSAVAVQLAEVKADVAAQHAWADAKK</sequence>
<keyword id="KW-0028">Amino-acid biosynthesis</keyword>
<keyword id="KW-0055">Arginine biosynthesis</keyword>
<keyword id="KW-0963">Cytoplasm</keyword>
<keyword id="KW-0456">Lyase</keyword>
<keyword id="KW-1185">Reference proteome</keyword>
<reference key="1">
    <citation type="journal article" date="2002" name="Nature">
        <title>Complete genome sequence of the model actinomycete Streptomyces coelicolor A3(2).</title>
        <authorList>
            <person name="Bentley S.D."/>
            <person name="Chater K.F."/>
            <person name="Cerdeno-Tarraga A.-M."/>
            <person name="Challis G.L."/>
            <person name="Thomson N.R."/>
            <person name="James K.D."/>
            <person name="Harris D.E."/>
            <person name="Quail M.A."/>
            <person name="Kieser H."/>
            <person name="Harper D."/>
            <person name="Bateman A."/>
            <person name="Brown S."/>
            <person name="Chandra G."/>
            <person name="Chen C.W."/>
            <person name="Collins M."/>
            <person name="Cronin A."/>
            <person name="Fraser A."/>
            <person name="Goble A."/>
            <person name="Hidalgo J."/>
            <person name="Hornsby T."/>
            <person name="Howarth S."/>
            <person name="Huang C.-H."/>
            <person name="Kieser T."/>
            <person name="Larke L."/>
            <person name="Murphy L.D."/>
            <person name="Oliver K."/>
            <person name="O'Neil S."/>
            <person name="Rabbinowitsch E."/>
            <person name="Rajandream M.A."/>
            <person name="Rutherford K.M."/>
            <person name="Rutter S."/>
            <person name="Seeger K."/>
            <person name="Saunders D."/>
            <person name="Sharp S."/>
            <person name="Squares R."/>
            <person name="Squares S."/>
            <person name="Taylor K."/>
            <person name="Warren T."/>
            <person name="Wietzorrek A."/>
            <person name="Woodward J.R."/>
            <person name="Barrell B.G."/>
            <person name="Parkhill J."/>
            <person name="Hopwood D.A."/>
        </authorList>
    </citation>
    <scope>NUCLEOTIDE SEQUENCE [LARGE SCALE GENOMIC DNA]</scope>
    <source>
        <strain>ATCC BAA-471 / A3(2) / M145</strain>
    </source>
</reference>
<evidence type="ECO:0000255" key="1">
    <source>
        <dbReference type="HAMAP-Rule" id="MF_00006"/>
    </source>
</evidence>
<comment type="catalytic activity">
    <reaction evidence="1">
        <text>2-(N(omega)-L-arginino)succinate = fumarate + L-arginine</text>
        <dbReference type="Rhea" id="RHEA:24020"/>
        <dbReference type="ChEBI" id="CHEBI:29806"/>
        <dbReference type="ChEBI" id="CHEBI:32682"/>
        <dbReference type="ChEBI" id="CHEBI:57472"/>
        <dbReference type="EC" id="4.3.2.1"/>
    </reaction>
</comment>
<comment type="pathway">
    <text evidence="1">Amino-acid biosynthesis; L-arginine biosynthesis; L-arginine from L-ornithine and carbamoyl phosphate: step 3/3.</text>
</comment>
<comment type="subcellular location">
    <subcellularLocation>
        <location evidence="1">Cytoplasm</location>
    </subcellularLocation>
</comment>
<comment type="similarity">
    <text evidence="1">Belongs to the lyase 1 family. Argininosuccinate lyase subfamily.</text>
</comment>
<feature type="chain" id="PRO_0000137833" description="Argininosuccinate lyase">
    <location>
        <begin position="1"/>
        <end position="475"/>
    </location>
</feature>
<accession>Q9L1B1</accession>
<dbReference type="EC" id="4.3.2.1" evidence="1"/>
<dbReference type="EMBL" id="AL939109">
    <property type="protein sequence ID" value="CAB76090.1"/>
    <property type="molecule type" value="Genomic_DNA"/>
</dbReference>
<dbReference type="RefSeq" id="NP_625847.1">
    <property type="nucleotide sequence ID" value="NC_003888.3"/>
</dbReference>
<dbReference type="RefSeq" id="WP_011027854.1">
    <property type="nucleotide sequence ID" value="NZ_VNID01000021.1"/>
</dbReference>
<dbReference type="SMR" id="Q9L1B1"/>
<dbReference type="FunCoup" id="Q9L1B1">
    <property type="interactions" value="398"/>
</dbReference>
<dbReference type="STRING" id="100226.gene:17759163"/>
<dbReference type="PaxDb" id="100226-SCO1570"/>
<dbReference type="GeneID" id="91387454"/>
<dbReference type="KEGG" id="sco:SCO1570"/>
<dbReference type="PATRIC" id="fig|100226.15.peg.1582"/>
<dbReference type="eggNOG" id="COG0165">
    <property type="taxonomic scope" value="Bacteria"/>
</dbReference>
<dbReference type="HOGENOM" id="CLU_027272_2_2_11"/>
<dbReference type="InParanoid" id="Q9L1B1"/>
<dbReference type="OrthoDB" id="9769623at2"/>
<dbReference type="PhylomeDB" id="Q9L1B1"/>
<dbReference type="UniPathway" id="UPA00068">
    <property type="reaction ID" value="UER00114"/>
</dbReference>
<dbReference type="Proteomes" id="UP000001973">
    <property type="component" value="Chromosome"/>
</dbReference>
<dbReference type="GO" id="GO:0005829">
    <property type="term" value="C:cytosol"/>
    <property type="evidence" value="ECO:0000318"/>
    <property type="project" value="GO_Central"/>
</dbReference>
<dbReference type="GO" id="GO:0004056">
    <property type="term" value="F:argininosuccinate lyase activity"/>
    <property type="evidence" value="ECO:0000318"/>
    <property type="project" value="GO_Central"/>
</dbReference>
<dbReference type="GO" id="GO:0042450">
    <property type="term" value="P:arginine biosynthetic process via ornithine"/>
    <property type="evidence" value="ECO:0000318"/>
    <property type="project" value="GO_Central"/>
</dbReference>
<dbReference type="GO" id="GO:0006526">
    <property type="term" value="P:L-arginine biosynthetic process"/>
    <property type="evidence" value="ECO:0007669"/>
    <property type="project" value="UniProtKB-UniRule"/>
</dbReference>
<dbReference type="CDD" id="cd01359">
    <property type="entry name" value="Argininosuccinate_lyase"/>
    <property type="match status" value="1"/>
</dbReference>
<dbReference type="FunFam" id="1.10.275.10:FF:000002">
    <property type="entry name" value="Argininosuccinate lyase"/>
    <property type="match status" value="1"/>
</dbReference>
<dbReference type="FunFam" id="1.10.40.30:FF:000001">
    <property type="entry name" value="Argininosuccinate lyase"/>
    <property type="match status" value="1"/>
</dbReference>
<dbReference type="FunFam" id="1.20.200.10:FF:000002">
    <property type="entry name" value="Argininosuccinate lyase"/>
    <property type="match status" value="1"/>
</dbReference>
<dbReference type="Gene3D" id="1.10.40.30">
    <property type="entry name" value="Fumarase/aspartase (C-terminal domain)"/>
    <property type="match status" value="1"/>
</dbReference>
<dbReference type="Gene3D" id="1.20.200.10">
    <property type="entry name" value="Fumarase/aspartase (Central domain)"/>
    <property type="match status" value="1"/>
</dbReference>
<dbReference type="Gene3D" id="1.10.275.10">
    <property type="entry name" value="Fumarase/aspartase (N-terminal domain)"/>
    <property type="match status" value="1"/>
</dbReference>
<dbReference type="HAMAP" id="MF_00006">
    <property type="entry name" value="Arg_succ_lyase"/>
    <property type="match status" value="1"/>
</dbReference>
<dbReference type="InterPro" id="IPR029419">
    <property type="entry name" value="Arg_succ_lyase_C"/>
</dbReference>
<dbReference type="InterPro" id="IPR009049">
    <property type="entry name" value="Argininosuccinate_lyase"/>
</dbReference>
<dbReference type="InterPro" id="IPR024083">
    <property type="entry name" value="Fumarase/histidase_N"/>
</dbReference>
<dbReference type="InterPro" id="IPR020557">
    <property type="entry name" value="Fumarate_lyase_CS"/>
</dbReference>
<dbReference type="InterPro" id="IPR000362">
    <property type="entry name" value="Fumarate_lyase_fam"/>
</dbReference>
<dbReference type="InterPro" id="IPR022761">
    <property type="entry name" value="Fumarate_lyase_N"/>
</dbReference>
<dbReference type="InterPro" id="IPR008948">
    <property type="entry name" value="L-Aspartase-like"/>
</dbReference>
<dbReference type="NCBIfam" id="TIGR00838">
    <property type="entry name" value="argH"/>
    <property type="match status" value="1"/>
</dbReference>
<dbReference type="PANTHER" id="PTHR43814">
    <property type="entry name" value="ARGININOSUCCINATE LYASE"/>
    <property type="match status" value="1"/>
</dbReference>
<dbReference type="PANTHER" id="PTHR43814:SF1">
    <property type="entry name" value="ARGININOSUCCINATE LYASE"/>
    <property type="match status" value="1"/>
</dbReference>
<dbReference type="Pfam" id="PF14698">
    <property type="entry name" value="ASL_C2"/>
    <property type="match status" value="1"/>
</dbReference>
<dbReference type="Pfam" id="PF00206">
    <property type="entry name" value="Lyase_1"/>
    <property type="match status" value="1"/>
</dbReference>
<dbReference type="PRINTS" id="PR00145">
    <property type="entry name" value="ARGSUCLYASE"/>
</dbReference>
<dbReference type="PRINTS" id="PR00149">
    <property type="entry name" value="FUMRATELYASE"/>
</dbReference>
<dbReference type="SUPFAM" id="SSF48557">
    <property type="entry name" value="L-aspartase-like"/>
    <property type="match status" value="1"/>
</dbReference>
<dbReference type="PROSITE" id="PS00163">
    <property type="entry name" value="FUMARATE_LYASES"/>
    <property type="match status" value="1"/>
</dbReference>